<evidence type="ECO:0000255" key="1"/>
<evidence type="ECO:0000269" key="2">
    <source>
    </source>
</evidence>
<evidence type="ECO:0000269" key="3">
    <source>
    </source>
</evidence>
<evidence type="ECO:0000269" key="4">
    <source>
    </source>
</evidence>
<evidence type="ECO:0000303" key="5">
    <source>
    </source>
</evidence>
<evidence type="ECO:0000305" key="6"/>
<name>DCUC_ECOLI</name>
<dbReference type="EMBL" id="X99112">
    <property type="protein sequence ID" value="CAA67561.1"/>
    <property type="molecule type" value="Genomic_DNA"/>
</dbReference>
<dbReference type="EMBL" id="U82598">
    <property type="protein sequence ID" value="AAB40821.1"/>
    <property type="molecule type" value="Genomic_DNA"/>
</dbReference>
<dbReference type="EMBL" id="U00096">
    <property type="protein sequence ID" value="AAC73722.1"/>
    <property type="molecule type" value="Genomic_DNA"/>
</dbReference>
<dbReference type="EMBL" id="AP009048">
    <property type="protein sequence ID" value="BAA35264.1"/>
    <property type="status" value="ALT_TERM"/>
    <property type="molecule type" value="Genomic_DNA"/>
</dbReference>
<dbReference type="EMBL" id="AP009048">
    <property type="protein sequence ID" value="BAA35263.1"/>
    <property type="status" value="ALT_INIT"/>
    <property type="molecule type" value="Genomic_DNA"/>
</dbReference>
<dbReference type="PIR" id="C64796">
    <property type="entry name" value="C64796"/>
</dbReference>
<dbReference type="RefSeq" id="NP_415154.1">
    <property type="nucleotide sequence ID" value="NC_000913.3"/>
</dbReference>
<dbReference type="RefSeq" id="WP_000955063.1">
    <property type="nucleotide sequence ID" value="NZ_STEB01000031.1"/>
</dbReference>
<dbReference type="SMR" id="P0ABP3"/>
<dbReference type="FunCoup" id="P0ABP3">
    <property type="interactions" value="27"/>
</dbReference>
<dbReference type="STRING" id="511145.b0621"/>
<dbReference type="TCDB" id="2.A.61.1.1">
    <property type="family name" value="the c4-dicarboxylate uptake c (dcuc) family"/>
</dbReference>
<dbReference type="PaxDb" id="511145-b0621"/>
<dbReference type="EnsemblBacteria" id="AAC73722">
    <property type="protein sequence ID" value="AAC73722"/>
    <property type="gene ID" value="b0621"/>
</dbReference>
<dbReference type="GeneID" id="75205017"/>
<dbReference type="GeneID" id="945000"/>
<dbReference type="KEGG" id="ecj:JW0613"/>
<dbReference type="KEGG" id="ecj:JW0616"/>
<dbReference type="KEGG" id="eco:b0621"/>
<dbReference type="KEGG" id="ecoc:C3026_03105"/>
<dbReference type="PATRIC" id="fig|1411691.4.peg.1647"/>
<dbReference type="EchoBASE" id="EB3315"/>
<dbReference type="eggNOG" id="COG3069">
    <property type="taxonomic scope" value="Bacteria"/>
</dbReference>
<dbReference type="HOGENOM" id="CLU_030262_2_0_6"/>
<dbReference type="InParanoid" id="P0ABP3"/>
<dbReference type="OMA" id="KYMLQYR"/>
<dbReference type="OrthoDB" id="1674075at2"/>
<dbReference type="PhylomeDB" id="P0ABP3"/>
<dbReference type="BioCyc" id="EcoCyc:DCUC-MONOMER"/>
<dbReference type="BioCyc" id="MetaCyc:DCUC-MONOMER"/>
<dbReference type="PRO" id="PR:P0ABP3"/>
<dbReference type="Proteomes" id="UP000000625">
    <property type="component" value="Chromosome"/>
</dbReference>
<dbReference type="GO" id="GO:0005886">
    <property type="term" value="C:plasma membrane"/>
    <property type="evidence" value="ECO:0000314"/>
    <property type="project" value="EcoCyc"/>
</dbReference>
<dbReference type="GO" id="GO:0005469">
    <property type="term" value="F:succinate:fumarate antiporter activity"/>
    <property type="evidence" value="ECO:0000314"/>
    <property type="project" value="EcoCyc"/>
</dbReference>
<dbReference type="GO" id="GO:0015293">
    <property type="term" value="F:symporter activity"/>
    <property type="evidence" value="ECO:0007669"/>
    <property type="project" value="UniProtKB-KW"/>
</dbReference>
<dbReference type="GO" id="GO:0015740">
    <property type="term" value="P:C4-dicarboxylate transport"/>
    <property type="evidence" value="ECO:0000316"/>
    <property type="project" value="EcoliWiki"/>
</dbReference>
<dbReference type="GO" id="GO:0019664">
    <property type="term" value="P:mixed acid fermentation"/>
    <property type="evidence" value="ECO:0000270"/>
    <property type="project" value="EcoCyc"/>
</dbReference>
<dbReference type="InterPro" id="IPR004669">
    <property type="entry name" value="C4_dicarb_anaerob_car"/>
</dbReference>
<dbReference type="InterPro" id="IPR018385">
    <property type="entry name" value="C4_dicarb_anaerob_car-like"/>
</dbReference>
<dbReference type="NCBIfam" id="TIGR00771">
    <property type="entry name" value="DcuC"/>
    <property type="match status" value="1"/>
</dbReference>
<dbReference type="NCBIfam" id="NF037994">
    <property type="entry name" value="DcuC_1"/>
    <property type="match status" value="1"/>
</dbReference>
<dbReference type="NCBIfam" id="NF007937">
    <property type="entry name" value="PRK10654.1"/>
    <property type="match status" value="1"/>
</dbReference>
<dbReference type="PANTHER" id="PTHR42002">
    <property type="entry name" value="ANAEROBIC C4-DICARBOXYLATE TRANSPORTER DCUC-RELATED"/>
    <property type="match status" value="1"/>
</dbReference>
<dbReference type="PANTHER" id="PTHR42002:SF2">
    <property type="entry name" value="ANAEROBIC C4-DICARBOXYLATE TRANSPORTER DCUC-RELATED"/>
    <property type="match status" value="1"/>
</dbReference>
<dbReference type="Pfam" id="PF03606">
    <property type="entry name" value="DcuC"/>
    <property type="match status" value="1"/>
</dbReference>
<organism>
    <name type="scientific">Escherichia coli (strain K12)</name>
    <dbReference type="NCBI Taxonomy" id="83333"/>
    <lineage>
        <taxon>Bacteria</taxon>
        <taxon>Pseudomonadati</taxon>
        <taxon>Pseudomonadota</taxon>
        <taxon>Gammaproteobacteria</taxon>
        <taxon>Enterobacterales</taxon>
        <taxon>Enterobacteriaceae</taxon>
        <taxon>Escherichia</taxon>
    </lineage>
</organism>
<sequence length="461" mass="48412">MLTFIELLIGVVVIVGVARYIIKGYSATGVLFVGGLLLLIISAIMGHKVLPSSQASTGYSATDIVEYVKILLMSRGGDLGMMIMMLCGFAAYMTHIGANDMVVKLASKPLQYINSPYLLMIAAYFVACLMSLAVSSATGLGVLLMATLFPVMVNVGISRGAAAAICASPAAIILAPTSGDVVLAAQASEMSLIDFAFKTTLPISIAAIIGMAIAHFFWQRYLDKKEHISHEMLDVSEITTTAPAFYAILPFTPIIGVLIFDGKWGPQLHIITILVICMLIASILEFLRSFNTQKVFSGLEVAYRGMADAFANVVMLLVAAGVFAQGLSTIGFIQSLISIATSFGSASIILMLVLVILTMLAAVTTGSGNAPFYAFVEMIPKLAHSSGINPAYLTIPMLQASNLGRTLSPVSGVVVAVAGMAKISPFEVVKRTSVPVLVGLVIVIVATELMVPGTAAAVTGK</sequence>
<reference key="1">
    <citation type="journal article" date="1996" name="J. Bacteriol.">
        <title>Identification of a third secondary carrier (DcuC) for anaerobic C4-dicarboxylate transport in Escherichia coli: roles of the three Dcu carriers in uptake and exchange.</title>
        <authorList>
            <person name="Zientz E."/>
            <person name="Six S."/>
            <person name="Unden G."/>
        </authorList>
    </citation>
    <scope>NUCLEOTIDE SEQUENCE [GENOMIC DNA]</scope>
    <scope>FUNCTION</scope>
    <scope>CATALYTIC ACTIVITY</scope>
    <scope>ACTIVITY REGULATION</scope>
    <scope>DISRUPTION PHENOTYPE</scope>
    <source>
        <strain>K12 / AN387</strain>
    </source>
</reference>
<reference key="2">
    <citation type="journal article" date="1996" name="DNA Res.">
        <title>A 718-kb DNA sequence of the Escherichia coli K-12 genome corresponding to the 12.7-28.0 min region on the linkage map.</title>
        <authorList>
            <person name="Oshima T."/>
            <person name="Aiba H."/>
            <person name="Baba T."/>
            <person name="Fujita K."/>
            <person name="Hayashi K."/>
            <person name="Honjo A."/>
            <person name="Ikemoto K."/>
            <person name="Inada T."/>
            <person name="Itoh T."/>
            <person name="Kajihara M."/>
            <person name="Kanai K."/>
            <person name="Kashimoto K."/>
            <person name="Kimura S."/>
            <person name="Kitagawa M."/>
            <person name="Makino K."/>
            <person name="Masuda S."/>
            <person name="Miki T."/>
            <person name="Mizobuchi K."/>
            <person name="Mori H."/>
            <person name="Motomura K."/>
            <person name="Nakamura Y."/>
            <person name="Nashimoto H."/>
            <person name="Nishio Y."/>
            <person name="Saito N."/>
            <person name="Sampei G."/>
            <person name="Seki Y."/>
            <person name="Tagami H."/>
            <person name="Takemoto K."/>
            <person name="Wada C."/>
            <person name="Yamamoto Y."/>
            <person name="Yano M."/>
            <person name="Horiuchi T."/>
        </authorList>
    </citation>
    <scope>NUCLEOTIDE SEQUENCE [GENOMIC DNA]</scope>
    <source>
        <strain>K12 / W3110 / ATCC 27325 / DSM 5911</strain>
    </source>
</reference>
<reference key="3">
    <citation type="submission" date="1997-01" db="EMBL/GenBank/DDBJ databases">
        <title>Sequence of minutes 4-25 of Escherichia coli.</title>
        <authorList>
            <person name="Chung E."/>
            <person name="Allen E."/>
            <person name="Araujo R."/>
            <person name="Aparicio A.M."/>
            <person name="Davis K."/>
            <person name="Duncan M."/>
            <person name="Federspiel N."/>
            <person name="Hyman R."/>
            <person name="Kalman S."/>
            <person name="Komp C."/>
            <person name="Kurdi O."/>
            <person name="Lew H."/>
            <person name="Lin D."/>
            <person name="Namath A."/>
            <person name="Oefner P."/>
            <person name="Roberts D."/>
            <person name="Schramm S."/>
            <person name="Davis R.W."/>
        </authorList>
    </citation>
    <scope>NUCLEOTIDE SEQUENCE [LARGE SCALE GENOMIC DNA]</scope>
    <source>
        <strain>K12 / MG1655 / ATCC 47076</strain>
    </source>
</reference>
<reference key="4">
    <citation type="journal article" date="1997" name="Science">
        <title>The complete genome sequence of Escherichia coli K-12.</title>
        <authorList>
            <person name="Blattner F.R."/>
            <person name="Plunkett G. III"/>
            <person name="Bloch C.A."/>
            <person name="Perna N.T."/>
            <person name="Burland V."/>
            <person name="Riley M."/>
            <person name="Collado-Vides J."/>
            <person name="Glasner J.D."/>
            <person name="Rode C.K."/>
            <person name="Mayhew G.F."/>
            <person name="Gregor J."/>
            <person name="Davis N.W."/>
            <person name="Kirkpatrick H.A."/>
            <person name="Goeden M.A."/>
            <person name="Rose D.J."/>
            <person name="Mau B."/>
            <person name="Shao Y."/>
        </authorList>
    </citation>
    <scope>NUCLEOTIDE SEQUENCE [LARGE SCALE GENOMIC DNA]</scope>
    <source>
        <strain>K12 / MG1655 / ATCC 47076</strain>
    </source>
</reference>
<reference key="5">
    <citation type="journal article" date="2006" name="Mol. Syst. Biol.">
        <title>Highly accurate genome sequences of Escherichia coli K-12 strains MG1655 and W3110.</title>
        <authorList>
            <person name="Hayashi K."/>
            <person name="Morooka N."/>
            <person name="Yamamoto Y."/>
            <person name="Fujita K."/>
            <person name="Isono K."/>
            <person name="Choi S."/>
            <person name="Ohtsubo E."/>
            <person name="Baba T."/>
            <person name="Wanner B.L."/>
            <person name="Mori H."/>
            <person name="Horiuchi T."/>
        </authorList>
    </citation>
    <scope>NUCLEOTIDE SEQUENCE [LARGE SCALE GENOMIC DNA]</scope>
    <source>
        <strain>K12 / W3110 / ATCC 27325 / DSM 5911</strain>
    </source>
</reference>
<reference key="6">
    <citation type="journal article" date="1999" name="J. Bacteriol.">
        <title>Functioning of DcuC as the C4-dicarboxylate carrier during glucose fermentation by Escherichia coli.</title>
        <authorList>
            <person name="Zientz E."/>
            <person name="Janausch I.G."/>
            <person name="Six S."/>
            <person name="Unden G."/>
        </authorList>
    </citation>
    <scope>FUNCTION</scope>
    <scope>ACTIVITY REGULATION</scope>
    <scope>INDUCTION</scope>
    <scope>DISRUPTION PHENOTYPE</scope>
    <source>
        <strain>K12 / AN387</strain>
    </source>
</reference>
<reference key="7">
    <citation type="journal article" date="2005" name="Science">
        <title>Global topology analysis of the Escherichia coli inner membrane proteome.</title>
        <authorList>
            <person name="Daley D.O."/>
            <person name="Rapp M."/>
            <person name="Granseth E."/>
            <person name="Melen K."/>
            <person name="Drew D."/>
            <person name="von Heijne G."/>
        </authorList>
    </citation>
    <scope>SUBCELLULAR LOCATION</scope>
    <source>
        <strain>K12 / MG1655 / ATCC 47076</strain>
    </source>
</reference>
<accession>P0ABP3</accession>
<accession>Q47134</accession>
<accession>Q9ZBC9</accession>
<accession>Q9ZBD0</accession>
<keyword id="KW-0050">Antiport</keyword>
<keyword id="KW-0997">Cell inner membrane</keyword>
<keyword id="KW-1003">Cell membrane</keyword>
<keyword id="KW-0472">Membrane</keyword>
<keyword id="KW-1185">Reference proteome</keyword>
<keyword id="KW-0769">Symport</keyword>
<keyword id="KW-0812">Transmembrane</keyword>
<keyword id="KW-1133">Transmembrane helix</keyword>
<keyword id="KW-0813">Transport</keyword>
<proteinExistence type="evidence at protein level"/>
<feature type="chain" id="PRO_0000201627" description="Anaerobic C4-dicarboxylate transporter DcuC">
    <location>
        <begin position="1"/>
        <end position="461"/>
    </location>
</feature>
<feature type="transmembrane region" description="Helical" evidence="1">
    <location>
        <begin position="2"/>
        <end position="22"/>
    </location>
</feature>
<feature type="transmembrane region" description="Helical" evidence="1">
    <location>
        <begin position="26"/>
        <end position="46"/>
    </location>
</feature>
<feature type="transmembrane region" description="Helical" evidence="1">
    <location>
        <begin position="79"/>
        <end position="99"/>
    </location>
</feature>
<feature type="transmembrane region" description="Helical" evidence="1">
    <location>
        <begin position="116"/>
        <end position="136"/>
    </location>
</feature>
<feature type="transmembrane region" description="Helical" evidence="1">
    <location>
        <begin position="137"/>
        <end position="157"/>
    </location>
</feature>
<feature type="transmembrane region" description="Helical" evidence="1">
    <location>
        <begin position="164"/>
        <end position="184"/>
    </location>
</feature>
<feature type="transmembrane region" description="Helical" evidence="1">
    <location>
        <begin position="199"/>
        <end position="219"/>
    </location>
</feature>
<feature type="transmembrane region" description="Helical" evidence="1">
    <location>
        <begin position="240"/>
        <end position="260"/>
    </location>
</feature>
<feature type="transmembrane region" description="Helical" evidence="1">
    <location>
        <begin position="267"/>
        <end position="287"/>
    </location>
</feature>
<feature type="transmembrane region" description="Helical" evidence="1">
    <location>
        <begin position="313"/>
        <end position="333"/>
    </location>
</feature>
<feature type="transmembrane region" description="Helical" evidence="1">
    <location>
        <begin position="343"/>
        <end position="363"/>
    </location>
</feature>
<feature type="transmembrane region" description="Helical" evidence="1">
    <location>
        <begin position="436"/>
        <end position="456"/>
    </location>
</feature>
<comment type="function">
    <text evidence="2 4">Responsible for the transport of C4-dicarboxylates during anaerobic growth (PubMed:10368146, PubMed:8955408). Catalyzes the uptake of fumarate coupled to the export of succinate (PubMed:8955408). Can also catalyze the uptake of fumarate and the efflux of succinate, without exchange (PubMed:10368146, PubMed:8955408). Shows low rates of transport, which are sufficient for succinate export during fermentation but not for fumarate-succinate exchange in fumarate respiration, indicating that it may function in vivo as the succinate efflux carrier for glucose fermentation, even if it is also able to operate as a fumarate-succinate antiporter (PubMed:10368146).</text>
</comment>
<comment type="catalytic activity">
    <reaction evidence="4">
        <text>fumarate(in) + succinate(out) = fumarate(out) + succinate(in)</text>
        <dbReference type="Rhea" id="RHEA:29323"/>
        <dbReference type="ChEBI" id="CHEBI:29806"/>
        <dbReference type="ChEBI" id="CHEBI:30031"/>
    </reaction>
    <physiologicalReaction direction="right-to-left" evidence="4">
        <dbReference type="Rhea" id="RHEA:29325"/>
    </physiologicalReaction>
</comment>
<comment type="catalytic activity">
    <reaction evidence="4">
        <text>fumarate(out) + 3 H(+)(out) = fumarate(in) + 3 H(+)(in)</text>
        <dbReference type="Rhea" id="RHEA:72455"/>
        <dbReference type="ChEBI" id="CHEBI:15378"/>
        <dbReference type="ChEBI" id="CHEBI:29806"/>
    </reaction>
    <physiologicalReaction direction="left-to-right" evidence="4">
        <dbReference type="Rhea" id="RHEA:72456"/>
    </physiologicalReaction>
</comment>
<comment type="activity regulation">
    <text evidence="2 4">Active under anaerobic conditions.</text>
</comment>
<comment type="subcellular location">
    <subcellularLocation>
        <location evidence="3">Cell inner membrane</location>
        <topology evidence="1">Multi-pass membrane protein</topology>
    </subcellularLocation>
</comment>
<comment type="induction">
    <text evidence="2">Expressed only under anaerobic conditions (PubMed:10368146). Anaerobic induction depends mainly on the transcriptional regulator FNR (PubMed:10368146). Nitrate and fumarate cause slight repression and stimulation of expression, respectively (PubMed:10368146). The expression is not subject to glucose repression (PubMed:10368146).</text>
</comment>
<comment type="disruption phenotype">
    <text evidence="2 4">Inactivation of the gene increases fumarate-succinate exchange and fumarate uptake by DcuA and DcuB, suggesting a preferential function of DcuC in succinate efflux during glucose fermentation (PubMed:10368146). The triple mutant dcuA-dcuB-dcuC is completely devoid of C4-dicarboxylate transport (exchange and uptake) during anaerobic growth, and the bacteria are no longer capable of growth by fumarate respiration (PubMed:8955408).</text>
</comment>
<comment type="similarity">
    <text evidence="6">Belongs to the DcuC/DcuD transporter (TC 2.A.61) family.</text>
</comment>
<comment type="caution">
    <text evidence="6">PubMed:8905232 and PubMed:16738553 sequences differ from that shown due to the presence of an IS5 insertion element between codons 327 and 328. Strain W3110A but not W3110B harbors this IS5 insertion.</text>
</comment>
<comment type="sequence caution" evidence="6">
    <conflict type="erroneous initiation">
        <sequence resource="EMBL-CDS" id="BAA35263"/>
    </conflict>
</comment>
<protein>
    <recommendedName>
        <fullName evidence="6">Anaerobic C4-dicarboxylate transporter DcuC</fullName>
    </recommendedName>
</protein>
<gene>
    <name evidence="5" type="primary">dcuC</name>
    <name type="ordered locus">b0621</name>
    <name type="ordered locus">JW0613/JW0616</name>
</gene>